<reference key="1">
    <citation type="journal article" date="2006" name="Appl. Environ. Microbiol.">
        <title>Genome sequence of the chemolithoautotrophic nitrite-oxidizing bacterium Nitrobacter winogradskyi Nb-255.</title>
        <authorList>
            <person name="Starkenburg S.R."/>
            <person name="Chain P.S.G."/>
            <person name="Sayavedra-Soto L.A."/>
            <person name="Hauser L."/>
            <person name="Land M.L."/>
            <person name="Larimer F.W."/>
            <person name="Malfatti S.A."/>
            <person name="Klotz M.G."/>
            <person name="Bottomley P.J."/>
            <person name="Arp D.J."/>
            <person name="Hickey W.J."/>
        </authorList>
    </citation>
    <scope>NUCLEOTIDE SEQUENCE [LARGE SCALE GENOMIC DNA]</scope>
    <source>
        <strain>ATCC 25391 / DSM 10237 / CIP 104748 / NCIMB 11846 / Nb-255</strain>
    </source>
</reference>
<name>LEU1_NITWN</name>
<proteinExistence type="inferred from homology"/>
<keyword id="KW-0028">Amino-acid biosynthesis</keyword>
<keyword id="KW-0100">Branched-chain amino acid biosynthesis</keyword>
<keyword id="KW-0963">Cytoplasm</keyword>
<keyword id="KW-0432">Leucine biosynthesis</keyword>
<keyword id="KW-0464">Manganese</keyword>
<keyword id="KW-0479">Metal-binding</keyword>
<keyword id="KW-1185">Reference proteome</keyword>
<keyword id="KW-0808">Transferase</keyword>
<evidence type="ECO:0000255" key="1">
    <source>
        <dbReference type="HAMAP-Rule" id="MF_01025"/>
    </source>
</evidence>
<organism>
    <name type="scientific">Nitrobacter winogradskyi (strain ATCC 25391 / DSM 10237 / CIP 104748 / NCIMB 11846 / Nb-255)</name>
    <dbReference type="NCBI Taxonomy" id="323098"/>
    <lineage>
        <taxon>Bacteria</taxon>
        <taxon>Pseudomonadati</taxon>
        <taxon>Pseudomonadota</taxon>
        <taxon>Alphaproteobacteria</taxon>
        <taxon>Hyphomicrobiales</taxon>
        <taxon>Nitrobacteraceae</taxon>
        <taxon>Nitrobacter</taxon>
    </lineage>
</organism>
<dbReference type="EC" id="2.3.3.13" evidence="1"/>
<dbReference type="EMBL" id="CP000115">
    <property type="protein sequence ID" value="ABA05592.1"/>
    <property type="molecule type" value="Genomic_DNA"/>
</dbReference>
<dbReference type="RefSeq" id="WP_011315556.1">
    <property type="nucleotide sequence ID" value="NC_007406.1"/>
</dbReference>
<dbReference type="SMR" id="Q3SQ49"/>
<dbReference type="STRING" id="323098.Nwi_2338"/>
<dbReference type="KEGG" id="nwi:Nwi_2338"/>
<dbReference type="eggNOG" id="COG0119">
    <property type="taxonomic scope" value="Bacteria"/>
</dbReference>
<dbReference type="HOGENOM" id="CLU_022158_0_1_5"/>
<dbReference type="OrthoDB" id="9803573at2"/>
<dbReference type="UniPathway" id="UPA00048">
    <property type="reaction ID" value="UER00070"/>
</dbReference>
<dbReference type="Proteomes" id="UP000002531">
    <property type="component" value="Chromosome"/>
</dbReference>
<dbReference type="GO" id="GO:0005829">
    <property type="term" value="C:cytosol"/>
    <property type="evidence" value="ECO:0007669"/>
    <property type="project" value="TreeGrafter"/>
</dbReference>
<dbReference type="GO" id="GO:0003852">
    <property type="term" value="F:2-isopropylmalate synthase activity"/>
    <property type="evidence" value="ECO:0007669"/>
    <property type="project" value="UniProtKB-UniRule"/>
</dbReference>
<dbReference type="GO" id="GO:0003985">
    <property type="term" value="F:acetyl-CoA C-acetyltransferase activity"/>
    <property type="evidence" value="ECO:0007669"/>
    <property type="project" value="UniProtKB-UniRule"/>
</dbReference>
<dbReference type="GO" id="GO:0030145">
    <property type="term" value="F:manganese ion binding"/>
    <property type="evidence" value="ECO:0007669"/>
    <property type="project" value="UniProtKB-UniRule"/>
</dbReference>
<dbReference type="GO" id="GO:0009098">
    <property type="term" value="P:L-leucine biosynthetic process"/>
    <property type="evidence" value="ECO:0007669"/>
    <property type="project" value="UniProtKB-UniRule"/>
</dbReference>
<dbReference type="CDD" id="cd07940">
    <property type="entry name" value="DRE_TIM_IPMS"/>
    <property type="match status" value="1"/>
</dbReference>
<dbReference type="FunFam" id="1.10.238.260:FF:000001">
    <property type="entry name" value="2-isopropylmalate synthase"/>
    <property type="match status" value="1"/>
</dbReference>
<dbReference type="FunFam" id="3.20.20.70:FF:000010">
    <property type="entry name" value="2-isopropylmalate synthase"/>
    <property type="match status" value="1"/>
</dbReference>
<dbReference type="FunFam" id="3.30.160.270:FF:000003">
    <property type="entry name" value="2-isopropylmalate synthase"/>
    <property type="match status" value="1"/>
</dbReference>
<dbReference type="Gene3D" id="1.10.238.260">
    <property type="match status" value="1"/>
</dbReference>
<dbReference type="Gene3D" id="3.30.160.270">
    <property type="match status" value="1"/>
</dbReference>
<dbReference type="Gene3D" id="3.20.20.70">
    <property type="entry name" value="Aldolase class I"/>
    <property type="match status" value="1"/>
</dbReference>
<dbReference type="HAMAP" id="MF_01025">
    <property type="entry name" value="LeuA_type1"/>
    <property type="match status" value="1"/>
</dbReference>
<dbReference type="InterPro" id="IPR050073">
    <property type="entry name" value="2-IPM_HCS-like"/>
</dbReference>
<dbReference type="InterPro" id="IPR013709">
    <property type="entry name" value="2-isopropylmalate_synth_dimer"/>
</dbReference>
<dbReference type="InterPro" id="IPR002034">
    <property type="entry name" value="AIPM/Hcit_synth_CS"/>
</dbReference>
<dbReference type="InterPro" id="IPR013785">
    <property type="entry name" value="Aldolase_TIM"/>
</dbReference>
<dbReference type="InterPro" id="IPR054691">
    <property type="entry name" value="LeuA/HCS_post-cat"/>
</dbReference>
<dbReference type="InterPro" id="IPR036230">
    <property type="entry name" value="LeuA_allosteric_dom_sf"/>
</dbReference>
<dbReference type="InterPro" id="IPR005671">
    <property type="entry name" value="LeuA_bact_synth"/>
</dbReference>
<dbReference type="InterPro" id="IPR000891">
    <property type="entry name" value="PYR_CT"/>
</dbReference>
<dbReference type="NCBIfam" id="TIGR00973">
    <property type="entry name" value="leuA_bact"/>
    <property type="match status" value="1"/>
</dbReference>
<dbReference type="NCBIfam" id="NF002086">
    <property type="entry name" value="PRK00915.1-3"/>
    <property type="match status" value="1"/>
</dbReference>
<dbReference type="NCBIfam" id="NF002087">
    <property type="entry name" value="PRK00915.1-4"/>
    <property type="match status" value="1"/>
</dbReference>
<dbReference type="PANTHER" id="PTHR10277:SF9">
    <property type="entry name" value="2-ISOPROPYLMALATE SYNTHASE 1, CHLOROPLASTIC-RELATED"/>
    <property type="match status" value="1"/>
</dbReference>
<dbReference type="PANTHER" id="PTHR10277">
    <property type="entry name" value="HOMOCITRATE SYNTHASE-RELATED"/>
    <property type="match status" value="1"/>
</dbReference>
<dbReference type="Pfam" id="PF22617">
    <property type="entry name" value="HCS_D2"/>
    <property type="match status" value="1"/>
</dbReference>
<dbReference type="Pfam" id="PF00682">
    <property type="entry name" value="HMGL-like"/>
    <property type="match status" value="1"/>
</dbReference>
<dbReference type="Pfam" id="PF08502">
    <property type="entry name" value="LeuA_dimer"/>
    <property type="match status" value="1"/>
</dbReference>
<dbReference type="SMART" id="SM00917">
    <property type="entry name" value="LeuA_dimer"/>
    <property type="match status" value="1"/>
</dbReference>
<dbReference type="SUPFAM" id="SSF110921">
    <property type="entry name" value="2-isopropylmalate synthase LeuA, allosteric (dimerisation) domain"/>
    <property type="match status" value="1"/>
</dbReference>
<dbReference type="SUPFAM" id="SSF51569">
    <property type="entry name" value="Aldolase"/>
    <property type="match status" value="1"/>
</dbReference>
<dbReference type="PROSITE" id="PS00815">
    <property type="entry name" value="AIPM_HOMOCIT_SYNTH_1"/>
    <property type="match status" value="1"/>
</dbReference>
<dbReference type="PROSITE" id="PS00816">
    <property type="entry name" value="AIPM_HOMOCIT_SYNTH_2"/>
    <property type="match status" value="1"/>
</dbReference>
<dbReference type="PROSITE" id="PS50991">
    <property type="entry name" value="PYR_CT"/>
    <property type="match status" value="1"/>
</dbReference>
<protein>
    <recommendedName>
        <fullName evidence="1">2-isopropylmalate synthase</fullName>
        <ecNumber evidence="1">2.3.3.13</ecNumber>
    </recommendedName>
    <alternativeName>
        <fullName evidence="1">Alpha-IPM synthase</fullName>
    </alternativeName>
    <alternativeName>
        <fullName evidence="1">Alpha-isopropylmalate synthase</fullName>
    </alternativeName>
</protein>
<accession>Q3SQ49</accession>
<gene>
    <name evidence="1" type="primary">leuA</name>
    <name type="ordered locus">Nwi_2338</name>
</gene>
<feature type="chain" id="PRO_1000149232" description="2-isopropylmalate synthase">
    <location>
        <begin position="1"/>
        <end position="519"/>
    </location>
</feature>
<feature type="domain" description="Pyruvate carboxyltransferase" evidence="1">
    <location>
        <begin position="12"/>
        <end position="274"/>
    </location>
</feature>
<feature type="region of interest" description="Regulatory domain" evidence="1">
    <location>
        <begin position="398"/>
        <end position="519"/>
    </location>
</feature>
<feature type="binding site" evidence="1">
    <location>
        <position position="21"/>
    </location>
    <ligand>
        <name>Mn(2+)</name>
        <dbReference type="ChEBI" id="CHEBI:29035"/>
    </ligand>
</feature>
<feature type="binding site" evidence="1">
    <location>
        <position position="209"/>
    </location>
    <ligand>
        <name>Mn(2+)</name>
        <dbReference type="ChEBI" id="CHEBI:29035"/>
    </ligand>
</feature>
<feature type="binding site" evidence="1">
    <location>
        <position position="211"/>
    </location>
    <ligand>
        <name>Mn(2+)</name>
        <dbReference type="ChEBI" id="CHEBI:29035"/>
    </ligand>
</feature>
<feature type="binding site" evidence="1">
    <location>
        <position position="245"/>
    </location>
    <ligand>
        <name>Mn(2+)</name>
        <dbReference type="ChEBI" id="CHEBI:29035"/>
    </ligand>
</feature>
<comment type="function">
    <text evidence="1">Catalyzes the condensation of the acetyl group of acetyl-CoA with 3-methyl-2-oxobutanoate (2-ketoisovalerate) to form 3-carboxy-3-hydroxy-4-methylpentanoate (2-isopropylmalate).</text>
</comment>
<comment type="catalytic activity">
    <reaction evidence="1">
        <text>3-methyl-2-oxobutanoate + acetyl-CoA + H2O = (2S)-2-isopropylmalate + CoA + H(+)</text>
        <dbReference type="Rhea" id="RHEA:21524"/>
        <dbReference type="ChEBI" id="CHEBI:1178"/>
        <dbReference type="ChEBI" id="CHEBI:11851"/>
        <dbReference type="ChEBI" id="CHEBI:15377"/>
        <dbReference type="ChEBI" id="CHEBI:15378"/>
        <dbReference type="ChEBI" id="CHEBI:57287"/>
        <dbReference type="ChEBI" id="CHEBI:57288"/>
        <dbReference type="EC" id="2.3.3.13"/>
    </reaction>
</comment>
<comment type="cofactor">
    <cofactor evidence="1">
        <name>Mn(2+)</name>
        <dbReference type="ChEBI" id="CHEBI:29035"/>
    </cofactor>
</comment>
<comment type="pathway">
    <text evidence="1">Amino-acid biosynthesis; L-leucine biosynthesis; L-leucine from 3-methyl-2-oxobutanoate: step 1/4.</text>
</comment>
<comment type="subunit">
    <text evidence="1">Homodimer.</text>
</comment>
<comment type="subcellular location">
    <subcellularLocation>
        <location evidence="1">Cytoplasm</location>
    </subcellularLocation>
</comment>
<comment type="similarity">
    <text evidence="1">Belongs to the alpha-IPM synthase/homocitrate synthase family. LeuA type 1 subfamily.</text>
</comment>
<sequence>MTPANKSDKDRVVIFDTTLRDGEQCPGATMTFEEKIEVAEMLDGMGVDIIEAGFPIASVGDFEAVAEIARNARNAVIAGLARAIPGDIARAGEAVRHARRGRIHTFVSTSPIHLAHQMRKSEAEVLEIITATVKQARNLVEDVEWSAMDATRTPIDYLCKCVEAAIAAGATTINLPDTVGYAVPDEYRRMFKTIRERVPSADKAIFSVHCHDDLGLAVANSLAGVEGGARQVESTINGIGERAGNAALEEVVMAIKTRADVMPYWCNVESTMLTRASKMVSAATSFPVQYNKAIVGRNAFAHESGIHQDGMLKNAQTYEIMTPESVGVKQTSLVMGKHSGRHAFQHKLEELGYKLAENQLQDAFVRFKALADRKKDIYDEDIIALVDEEMAATHDRIKLSSLTVIAGTHGPQRATMKLTVSGQTRIEEAEGNGPVDAVFNCIKRLVPHEAKLELYQVHAVTQGTDAQAEVSVRLSQDGRAMTSKAADPDTLVASAKAYLGALNKIVMKHQRDVPAAAAS</sequence>